<protein>
    <recommendedName>
        <fullName evidence="1">UvrABC system protein C</fullName>
        <shortName evidence="1">Protein UvrC</shortName>
    </recommendedName>
    <alternativeName>
        <fullName evidence="1">Excinuclease ABC subunit C</fullName>
    </alternativeName>
</protein>
<gene>
    <name evidence="1" type="primary">uvrC</name>
    <name type="ordered locus">EFER_1181</name>
</gene>
<dbReference type="EMBL" id="CU928158">
    <property type="protein sequence ID" value="CAQ88708.1"/>
    <property type="molecule type" value="Genomic_DNA"/>
</dbReference>
<dbReference type="RefSeq" id="WP_001283403.1">
    <property type="nucleotide sequence ID" value="NC_011740.1"/>
</dbReference>
<dbReference type="SMR" id="B7LPF5"/>
<dbReference type="GeneID" id="75057773"/>
<dbReference type="KEGG" id="efe:EFER_1181"/>
<dbReference type="HOGENOM" id="CLU_014841_3_0_6"/>
<dbReference type="OrthoDB" id="9804933at2"/>
<dbReference type="Proteomes" id="UP000000745">
    <property type="component" value="Chromosome"/>
</dbReference>
<dbReference type="GO" id="GO:0005737">
    <property type="term" value="C:cytoplasm"/>
    <property type="evidence" value="ECO:0007669"/>
    <property type="project" value="UniProtKB-SubCell"/>
</dbReference>
<dbReference type="GO" id="GO:0009380">
    <property type="term" value="C:excinuclease repair complex"/>
    <property type="evidence" value="ECO:0007669"/>
    <property type="project" value="InterPro"/>
</dbReference>
<dbReference type="GO" id="GO:0003677">
    <property type="term" value="F:DNA binding"/>
    <property type="evidence" value="ECO:0007669"/>
    <property type="project" value="UniProtKB-UniRule"/>
</dbReference>
<dbReference type="GO" id="GO:0009381">
    <property type="term" value="F:excinuclease ABC activity"/>
    <property type="evidence" value="ECO:0007669"/>
    <property type="project" value="UniProtKB-UniRule"/>
</dbReference>
<dbReference type="GO" id="GO:0006289">
    <property type="term" value="P:nucleotide-excision repair"/>
    <property type="evidence" value="ECO:0007669"/>
    <property type="project" value="UniProtKB-UniRule"/>
</dbReference>
<dbReference type="GO" id="GO:0009432">
    <property type="term" value="P:SOS response"/>
    <property type="evidence" value="ECO:0007669"/>
    <property type="project" value="UniProtKB-UniRule"/>
</dbReference>
<dbReference type="CDD" id="cd10434">
    <property type="entry name" value="GIY-YIG_UvrC_Cho"/>
    <property type="match status" value="1"/>
</dbReference>
<dbReference type="FunFam" id="1.10.150.20:FF:000005">
    <property type="entry name" value="UvrABC system protein C"/>
    <property type="match status" value="1"/>
</dbReference>
<dbReference type="FunFam" id="3.30.420.340:FF:000001">
    <property type="entry name" value="UvrABC system protein C"/>
    <property type="match status" value="1"/>
</dbReference>
<dbReference type="FunFam" id="3.40.1440.10:FF:000001">
    <property type="entry name" value="UvrABC system protein C"/>
    <property type="match status" value="1"/>
</dbReference>
<dbReference type="FunFam" id="4.10.860.10:FF:000002">
    <property type="entry name" value="UvrABC system protein C"/>
    <property type="match status" value="1"/>
</dbReference>
<dbReference type="Gene3D" id="1.10.150.20">
    <property type="entry name" value="5' to 3' exonuclease, C-terminal subdomain"/>
    <property type="match status" value="1"/>
</dbReference>
<dbReference type="Gene3D" id="3.40.1440.10">
    <property type="entry name" value="GIY-YIG endonuclease"/>
    <property type="match status" value="1"/>
</dbReference>
<dbReference type="Gene3D" id="4.10.860.10">
    <property type="entry name" value="UVR domain"/>
    <property type="match status" value="1"/>
</dbReference>
<dbReference type="Gene3D" id="3.30.420.340">
    <property type="entry name" value="UvrC, RNAse H endonuclease domain"/>
    <property type="match status" value="1"/>
</dbReference>
<dbReference type="HAMAP" id="MF_00203">
    <property type="entry name" value="UvrC"/>
    <property type="match status" value="1"/>
</dbReference>
<dbReference type="InterPro" id="IPR000305">
    <property type="entry name" value="GIY-YIG_endonuc"/>
</dbReference>
<dbReference type="InterPro" id="IPR035901">
    <property type="entry name" value="GIY-YIG_endonuc_sf"/>
</dbReference>
<dbReference type="InterPro" id="IPR047296">
    <property type="entry name" value="GIY-YIG_UvrC_Cho"/>
</dbReference>
<dbReference type="InterPro" id="IPR003583">
    <property type="entry name" value="Hlx-hairpin-Hlx_DNA-bd_motif"/>
</dbReference>
<dbReference type="InterPro" id="IPR010994">
    <property type="entry name" value="RuvA_2-like"/>
</dbReference>
<dbReference type="InterPro" id="IPR001943">
    <property type="entry name" value="UVR_dom"/>
</dbReference>
<dbReference type="InterPro" id="IPR036876">
    <property type="entry name" value="UVR_dom_sf"/>
</dbReference>
<dbReference type="InterPro" id="IPR050066">
    <property type="entry name" value="UvrABC_protein_C"/>
</dbReference>
<dbReference type="InterPro" id="IPR004791">
    <property type="entry name" value="UvrC"/>
</dbReference>
<dbReference type="InterPro" id="IPR001162">
    <property type="entry name" value="UvrC_RNase_H_dom"/>
</dbReference>
<dbReference type="InterPro" id="IPR038476">
    <property type="entry name" value="UvrC_RNase_H_dom_sf"/>
</dbReference>
<dbReference type="NCBIfam" id="NF001824">
    <property type="entry name" value="PRK00558.1-5"/>
    <property type="match status" value="1"/>
</dbReference>
<dbReference type="NCBIfam" id="TIGR00194">
    <property type="entry name" value="uvrC"/>
    <property type="match status" value="1"/>
</dbReference>
<dbReference type="PANTHER" id="PTHR30562:SF1">
    <property type="entry name" value="UVRABC SYSTEM PROTEIN C"/>
    <property type="match status" value="1"/>
</dbReference>
<dbReference type="PANTHER" id="PTHR30562">
    <property type="entry name" value="UVRC/OXIDOREDUCTASE"/>
    <property type="match status" value="1"/>
</dbReference>
<dbReference type="Pfam" id="PF01541">
    <property type="entry name" value="GIY-YIG"/>
    <property type="match status" value="1"/>
</dbReference>
<dbReference type="Pfam" id="PF14520">
    <property type="entry name" value="HHH_5"/>
    <property type="match status" value="1"/>
</dbReference>
<dbReference type="Pfam" id="PF02151">
    <property type="entry name" value="UVR"/>
    <property type="match status" value="1"/>
</dbReference>
<dbReference type="Pfam" id="PF22920">
    <property type="entry name" value="UvrC_RNaseH"/>
    <property type="match status" value="1"/>
</dbReference>
<dbReference type="Pfam" id="PF08459">
    <property type="entry name" value="UvrC_RNaseH_dom"/>
    <property type="match status" value="1"/>
</dbReference>
<dbReference type="SMART" id="SM00465">
    <property type="entry name" value="GIYc"/>
    <property type="match status" value="1"/>
</dbReference>
<dbReference type="SMART" id="SM00278">
    <property type="entry name" value="HhH1"/>
    <property type="match status" value="2"/>
</dbReference>
<dbReference type="SUPFAM" id="SSF46600">
    <property type="entry name" value="C-terminal UvrC-binding domain of UvrB"/>
    <property type="match status" value="1"/>
</dbReference>
<dbReference type="SUPFAM" id="SSF82771">
    <property type="entry name" value="GIY-YIG endonuclease"/>
    <property type="match status" value="1"/>
</dbReference>
<dbReference type="SUPFAM" id="SSF47781">
    <property type="entry name" value="RuvA domain 2-like"/>
    <property type="match status" value="1"/>
</dbReference>
<dbReference type="PROSITE" id="PS50164">
    <property type="entry name" value="GIY_YIG"/>
    <property type="match status" value="1"/>
</dbReference>
<dbReference type="PROSITE" id="PS50151">
    <property type="entry name" value="UVR"/>
    <property type="match status" value="1"/>
</dbReference>
<dbReference type="PROSITE" id="PS50165">
    <property type="entry name" value="UVRC"/>
    <property type="match status" value="1"/>
</dbReference>
<accession>B7LPF5</accession>
<comment type="function">
    <text evidence="1">The UvrABC repair system catalyzes the recognition and processing of DNA lesions. UvrC both incises the 5' and 3' sides of the lesion. The N-terminal half is responsible for the 3' incision and the C-terminal half is responsible for the 5' incision.</text>
</comment>
<comment type="subunit">
    <text evidence="1">Interacts with UvrB in an incision complex.</text>
</comment>
<comment type="subcellular location">
    <subcellularLocation>
        <location evidence="1">Cytoplasm</location>
    </subcellularLocation>
</comment>
<comment type="similarity">
    <text evidence="1">Belongs to the UvrC family.</text>
</comment>
<feature type="chain" id="PRO_1000200589" description="UvrABC system protein C">
    <location>
        <begin position="1"/>
        <end position="610"/>
    </location>
</feature>
<feature type="domain" description="GIY-YIG" evidence="1">
    <location>
        <begin position="16"/>
        <end position="94"/>
    </location>
</feature>
<feature type="domain" description="UVR" evidence="1">
    <location>
        <begin position="204"/>
        <end position="239"/>
    </location>
</feature>
<reference key="1">
    <citation type="journal article" date="2009" name="PLoS Genet.">
        <title>Organised genome dynamics in the Escherichia coli species results in highly diverse adaptive paths.</title>
        <authorList>
            <person name="Touchon M."/>
            <person name="Hoede C."/>
            <person name="Tenaillon O."/>
            <person name="Barbe V."/>
            <person name="Baeriswyl S."/>
            <person name="Bidet P."/>
            <person name="Bingen E."/>
            <person name="Bonacorsi S."/>
            <person name="Bouchier C."/>
            <person name="Bouvet O."/>
            <person name="Calteau A."/>
            <person name="Chiapello H."/>
            <person name="Clermont O."/>
            <person name="Cruveiller S."/>
            <person name="Danchin A."/>
            <person name="Diard M."/>
            <person name="Dossat C."/>
            <person name="Karoui M.E."/>
            <person name="Frapy E."/>
            <person name="Garry L."/>
            <person name="Ghigo J.M."/>
            <person name="Gilles A.M."/>
            <person name="Johnson J."/>
            <person name="Le Bouguenec C."/>
            <person name="Lescat M."/>
            <person name="Mangenot S."/>
            <person name="Martinez-Jehanne V."/>
            <person name="Matic I."/>
            <person name="Nassif X."/>
            <person name="Oztas S."/>
            <person name="Petit M.A."/>
            <person name="Pichon C."/>
            <person name="Rouy Z."/>
            <person name="Ruf C.S."/>
            <person name="Schneider D."/>
            <person name="Tourret J."/>
            <person name="Vacherie B."/>
            <person name="Vallenet D."/>
            <person name="Medigue C."/>
            <person name="Rocha E.P.C."/>
            <person name="Denamur E."/>
        </authorList>
    </citation>
    <scope>NUCLEOTIDE SEQUENCE [LARGE SCALE GENOMIC DNA]</scope>
    <source>
        <strain>ATCC 35469 / DSM 13698 / BCRC 15582 / CCUG 18766 / IAM 14443 / JCM 21226 / LMG 7866 / NBRC 102419 / NCTC 12128 / CDC 0568-73</strain>
    </source>
</reference>
<proteinExistence type="inferred from homology"/>
<name>UVRC_ESCF3</name>
<sequence>MSDQFDAKAFLKTVTSQPGVYRMYDAGGTVIYVGKAKDLKKRLSSYFRSNLASRKTEALVAQIQQIDVTVTHTETEALLLEHNYIKLYQPRYNVLLRDDKSYPFIFLSGDTHPRLAMHRGAKHAKGEYFGPFPNGYAVRETLALLQKIFPIRQCENSVYRNRSRPCLQYQIGRCLGPCVAGLVSEEEYAQQVEYVRLFLSGKDDQVLTQLIARMEKASQNLEFEEAARIRDQIQAVRRVTEKQFVSNTGDDLDVIGVAFDAGMACVHVLFIRQGKVLGSRSYFPKVPGGTELGEVVETFVGQFYLQGSQMRTLPGEILLDFNLSDKTLLADSLTELAGRRINVQTKPRGDRARYLKLARTNAATALTSKLSQQSTVHQRLSALATVLKLPEVKRMECFDISHTMGEQTVASCVVFDANGPLRSEYRRYNITGITPGDDYAAMNQVLRRRYGKAIEESKIPDVILIDGGKGQLAQAKAVFAELDVPWDKNRPLLLGVAKGADRKAGLETLFFEPEGEGFSLPSDSPALHVIQHIRDESHDHAIGGHRKKRAKVKNTSTLETIEGVGPKRRQMLLKYMGGLQGLRNASVEEIAKVPGISQGLAEKIFWSLKH</sequence>
<organism>
    <name type="scientific">Escherichia fergusonii (strain ATCC 35469 / DSM 13698 / CCUG 18766 / IAM 14443 / JCM 21226 / LMG 7866 / NBRC 102419 / NCTC 12128 / CDC 0568-73)</name>
    <dbReference type="NCBI Taxonomy" id="585054"/>
    <lineage>
        <taxon>Bacteria</taxon>
        <taxon>Pseudomonadati</taxon>
        <taxon>Pseudomonadota</taxon>
        <taxon>Gammaproteobacteria</taxon>
        <taxon>Enterobacterales</taxon>
        <taxon>Enterobacteriaceae</taxon>
        <taxon>Escherichia</taxon>
    </lineage>
</organism>
<keyword id="KW-0963">Cytoplasm</keyword>
<keyword id="KW-0227">DNA damage</keyword>
<keyword id="KW-0228">DNA excision</keyword>
<keyword id="KW-0234">DNA repair</keyword>
<keyword id="KW-0267">Excision nuclease</keyword>
<keyword id="KW-0742">SOS response</keyword>
<evidence type="ECO:0000255" key="1">
    <source>
        <dbReference type="HAMAP-Rule" id="MF_00203"/>
    </source>
</evidence>